<protein>
    <recommendedName>
        <fullName evidence="1">RNA-directed RNA polymerase catalytic subunit</fullName>
        <ecNumber evidence="1">2.7.7.48</ecNumber>
    </recommendedName>
    <alternativeName>
        <fullName evidence="1">Polymerase basic protein 1</fullName>
        <shortName evidence="1">PB1</shortName>
    </alternativeName>
    <alternativeName>
        <fullName evidence="1">RNA-directed RNA polymerase subunit P1</fullName>
    </alternativeName>
</protein>
<proteinExistence type="inferred from homology"/>
<comment type="function">
    <text evidence="1">RNA-dependent RNA polymerase which is responsible for replication and transcription of virus RNA segments. The transcription of viral mRNAs occurs by a unique mechanism called cap-snatching. 5' methylated caps of cellular mRNAs are cleaved after 10-13 nucleotides by PA. In turn, these short capped RNAs are used as primers by PB1 for transcription of viral mRNAs. During virus replication, PB1 initiates RNA synthesis and copy vRNA into complementary RNA (cRNA) which in turn serves as a template for the production of more vRNAs.</text>
</comment>
<comment type="catalytic activity">
    <reaction evidence="1">
        <text>RNA(n) + a ribonucleoside 5'-triphosphate = RNA(n+1) + diphosphate</text>
        <dbReference type="Rhea" id="RHEA:21248"/>
        <dbReference type="Rhea" id="RHEA-COMP:14527"/>
        <dbReference type="Rhea" id="RHEA-COMP:17342"/>
        <dbReference type="ChEBI" id="CHEBI:33019"/>
        <dbReference type="ChEBI" id="CHEBI:61557"/>
        <dbReference type="ChEBI" id="CHEBI:140395"/>
        <dbReference type="EC" id="2.7.7.48"/>
    </reaction>
</comment>
<comment type="subunit">
    <text evidence="1">Influenza RNA polymerase is composed of three subunits: PB1, PB2 and PA. Interacts (via N-terminus) with PA (via C-terminus). Interacts (via C-terminus) with PB2 (via N-terminus); this interaction is essential for transcription initiation.</text>
</comment>
<comment type="subcellular location">
    <subcellularLocation>
        <location evidence="1">Host nucleus</location>
    </subcellularLocation>
    <subcellularLocation>
        <location evidence="1">Host cytoplasm</location>
    </subcellularLocation>
</comment>
<comment type="PTM">
    <text evidence="1">Phosphorylated by host PRKCA.</text>
</comment>
<comment type="similarity">
    <text evidence="1">Belongs to the influenza viruses polymerase PB1 family.</text>
</comment>
<organism>
    <name type="scientific">Influenza A virus (strain A/Chicken/Hong Kong/715.5/2001 H5N1 genotype E)</name>
    <dbReference type="NCBI Taxonomy" id="196434"/>
    <lineage>
        <taxon>Viruses</taxon>
        <taxon>Riboviria</taxon>
        <taxon>Orthornavirae</taxon>
        <taxon>Negarnaviricota</taxon>
        <taxon>Polyploviricotina</taxon>
        <taxon>Insthoviricetes</taxon>
        <taxon>Articulavirales</taxon>
        <taxon>Orthomyxoviridae</taxon>
        <taxon>Alphainfluenzavirus</taxon>
        <taxon>Alphainfluenzavirus influenzae</taxon>
        <taxon>Influenza A virus</taxon>
    </lineage>
</organism>
<evidence type="ECO:0000255" key="1">
    <source>
        <dbReference type="HAMAP-Rule" id="MF_04065"/>
    </source>
</evidence>
<evidence type="ECO:0000256" key="2">
    <source>
        <dbReference type="SAM" id="MobiDB-lite"/>
    </source>
</evidence>
<name>RDRP_I01A3</name>
<accession>Q809L9</accession>
<gene>
    <name evidence="1" type="primary">PB1</name>
</gene>
<dbReference type="EC" id="2.7.7.48" evidence="1"/>
<dbReference type="EMBL" id="AF509178">
    <property type="protein sequence ID" value="AAO53021.2"/>
    <property type="molecule type" value="Genomic_DNA"/>
</dbReference>
<dbReference type="SMR" id="Q809L9"/>
<dbReference type="GO" id="GO:0030430">
    <property type="term" value="C:host cell cytoplasm"/>
    <property type="evidence" value="ECO:0007669"/>
    <property type="project" value="UniProtKB-SubCell"/>
</dbReference>
<dbReference type="GO" id="GO:0042025">
    <property type="term" value="C:host cell nucleus"/>
    <property type="evidence" value="ECO:0007669"/>
    <property type="project" value="UniProtKB-SubCell"/>
</dbReference>
<dbReference type="GO" id="GO:0000166">
    <property type="term" value="F:nucleotide binding"/>
    <property type="evidence" value="ECO:0007669"/>
    <property type="project" value="UniProtKB-UniRule"/>
</dbReference>
<dbReference type="GO" id="GO:0003723">
    <property type="term" value="F:RNA binding"/>
    <property type="evidence" value="ECO:0007669"/>
    <property type="project" value="InterPro"/>
</dbReference>
<dbReference type="GO" id="GO:0003968">
    <property type="term" value="F:RNA-directed RNA polymerase activity"/>
    <property type="evidence" value="ECO:0007669"/>
    <property type="project" value="UniProtKB-UniRule"/>
</dbReference>
<dbReference type="GO" id="GO:0006351">
    <property type="term" value="P:DNA-templated transcription"/>
    <property type="evidence" value="ECO:0007669"/>
    <property type="project" value="UniProtKB-UniRule"/>
</dbReference>
<dbReference type="GO" id="GO:0039657">
    <property type="term" value="P:symbiont-mediated suppression of host gene expression"/>
    <property type="evidence" value="ECO:0007669"/>
    <property type="project" value="UniProtKB-KW"/>
</dbReference>
<dbReference type="GO" id="GO:0039523">
    <property type="term" value="P:symbiont-mediated suppression of host mRNA transcription via inhibition of RNA polymerase II activity"/>
    <property type="evidence" value="ECO:0007669"/>
    <property type="project" value="UniProtKB-UniRule"/>
</dbReference>
<dbReference type="GO" id="GO:0039694">
    <property type="term" value="P:viral RNA genome replication"/>
    <property type="evidence" value="ECO:0007669"/>
    <property type="project" value="UniProtKB-UniRule"/>
</dbReference>
<dbReference type="GO" id="GO:0019083">
    <property type="term" value="P:viral transcription"/>
    <property type="evidence" value="ECO:0007669"/>
    <property type="project" value="UniProtKB-KW"/>
</dbReference>
<dbReference type="Gene3D" id="6.10.140.720">
    <property type="match status" value="1"/>
</dbReference>
<dbReference type="HAMAP" id="MF_04065">
    <property type="entry name" value="INFV_RDRP"/>
    <property type="match status" value="1"/>
</dbReference>
<dbReference type="InterPro" id="IPR007099">
    <property type="entry name" value="RNA-dir_pol_NSvirus"/>
</dbReference>
<dbReference type="InterPro" id="IPR001407">
    <property type="entry name" value="RNA_pol_PB1_influenza"/>
</dbReference>
<dbReference type="Pfam" id="PF00602">
    <property type="entry name" value="Flu_PB1"/>
    <property type="match status" value="1"/>
</dbReference>
<dbReference type="PIRSF" id="PIRSF000827">
    <property type="entry name" value="RdRPol_OMV"/>
    <property type="match status" value="1"/>
</dbReference>
<dbReference type="PROSITE" id="PS50525">
    <property type="entry name" value="RDRP_SSRNA_NEG_SEG"/>
    <property type="match status" value="1"/>
</dbReference>
<organismHost>
    <name type="scientific">Aves</name>
    <dbReference type="NCBI Taxonomy" id="8782"/>
</organismHost>
<organismHost>
    <name type="scientific">Felis catus</name>
    <name type="common">Cat</name>
    <name type="synonym">Felis silvestris catus</name>
    <dbReference type="NCBI Taxonomy" id="9685"/>
</organismHost>
<organismHost>
    <name type="scientific">Homo sapiens</name>
    <name type="common">Human</name>
    <dbReference type="NCBI Taxonomy" id="9606"/>
</organismHost>
<organismHost>
    <name type="scientific">Panthera pardus</name>
    <name type="common">Leopard</name>
    <name type="synonym">Felis pardus</name>
    <dbReference type="NCBI Taxonomy" id="9691"/>
</organismHost>
<organismHost>
    <name type="scientific">Panthera tigris</name>
    <name type="common">Tiger</name>
    <dbReference type="NCBI Taxonomy" id="9694"/>
</organismHost>
<organismHost>
    <name type="scientific">Sus scrofa</name>
    <name type="common">Pig</name>
    <dbReference type="NCBI Taxonomy" id="9823"/>
</organismHost>
<keyword id="KW-1262">Eukaryotic host gene expression shutoff by virus</keyword>
<keyword id="KW-1191">Eukaryotic host transcription shutoff by virus</keyword>
<keyword id="KW-1035">Host cytoplasm</keyword>
<keyword id="KW-1190">Host gene expression shutoff by virus</keyword>
<keyword id="KW-1048">Host nucleus</keyword>
<keyword id="KW-0945">Host-virus interaction</keyword>
<keyword id="KW-1104">Inhibition of host RNA polymerase II by virus</keyword>
<keyword id="KW-0547">Nucleotide-binding</keyword>
<keyword id="KW-0548">Nucleotidyltransferase</keyword>
<keyword id="KW-0597">Phosphoprotein</keyword>
<keyword id="KW-0696">RNA-directed RNA polymerase</keyword>
<keyword id="KW-0808">Transferase</keyword>
<keyword id="KW-0693">Viral RNA replication</keyword>
<keyword id="KW-1195">Viral transcription</keyword>
<reference key="1">
    <citation type="journal article" date="2002" name="Proc. Natl. Acad. Sci. U.S.A.">
        <title>Emergence of multiple genotypes of H5N1 avian influenza viruses in Hong Kong SAR.</title>
        <authorList>
            <person name="Guan Y."/>
            <person name="Peiris J.S.M."/>
            <person name="Lipatov A.S."/>
            <person name="Ellis T.M."/>
            <person name="Dyrting K.C."/>
            <person name="Krauss S."/>
            <person name="Zhang L.J."/>
            <person name="Webster R.G."/>
            <person name="Shortridge K.F."/>
        </authorList>
    </citation>
    <scope>NUCLEOTIDE SEQUENCE [GENOMIC RNA]</scope>
</reference>
<reference key="2">
    <citation type="submission" date="2008-03" db="EMBL/GenBank/DDBJ databases">
        <authorList>
            <person name="Li K.S."/>
            <person name="Xu K.M."/>
            <person name="Guan Y."/>
        </authorList>
    </citation>
    <scope>SEQUENCE REVISION</scope>
</reference>
<sequence length="757" mass="86268">MDVNPTLLFLKVPAQNAISTTFPYTGDPPYSHGTGTGYTMDTVNRTHQYSEKGKWTTNTETGAPQLNPIDGPLPEDNEPSGYAQTDCVLEAMAFLEKSHPGIFENSCLETMEIVQQTRVDKLTQGRQTYDWTLNRNQPAATALANTIEVFRSNGLTANESGRLIDFLKDVMESMDKGEMEITTHFQRKRRVRDNMTKKMVTQRTIGKKKQRLNKRSYLIRALTLNTMTKDAERGKLKRRAIATPGMQIRGFVYFVETLARSICEKLEQSGLPVGGNEKKAKLANVVRKMMTNSQDTELSFTITGDNTKWNENQNPRMFLAMITYITRKQPEWFRNVLSIAPIMFSNKMARLGKGYMFESKSMKLRTQIPAEMLASIDLKYFNESTRKKIEKIRPLLIDGTASLSPGMMMGMFNMLSTVLGVSILNLGQKRYTKTTYWWDGLQSSDDFALIVNAPNHEGIQAGVDRFYRTCKLVGINMSKKKSYINRTGTFEFTSFFYRYGFVANFSMELPSFGVSGINESADMSIGVTVIKNNMINNDLGPATAQMALQLFIKDYRYTYRCHRGDTQIQTGRSFELKKLWEQTRSKAGLLVSDGGPNLYNIRNLHIPEVCLKWELMDEDYQGRLCNPLNPFVSHKEIESVNNAVVMPAHGPAKSMEYDAVATTHSWVPKRNRSILNTSQRGILEDEQMYQKCCNLFEKFFPSSSYRRPVGISSMVEAMVSRARIDARIDFESGRIKKEEFAEIMKICSTIEELRRQK</sequence>
<feature type="chain" id="PRO_0000311162" description="RNA-directed RNA polymerase catalytic subunit">
    <location>
        <begin position="1"/>
        <end position="757"/>
    </location>
</feature>
<feature type="domain" description="RdRp catalytic" evidence="1">
    <location>
        <begin position="286"/>
        <end position="483"/>
    </location>
</feature>
<feature type="region of interest" description="Disordered" evidence="2">
    <location>
        <begin position="50"/>
        <end position="82"/>
    </location>
</feature>
<feature type="region of interest" description="Promoter-binding site" evidence="1">
    <location>
        <begin position="249"/>
        <end position="256"/>
    </location>
</feature>
<feature type="short sequence motif" description="Nuclear localization signal" evidence="1">
    <location>
        <begin position="187"/>
        <end position="195"/>
    </location>
</feature>
<feature type="short sequence motif" description="Nuclear localization signal" evidence="1">
    <location>
        <begin position="203"/>
        <end position="216"/>
    </location>
</feature>
<feature type="compositionally biased region" description="Polar residues" evidence="2">
    <location>
        <begin position="55"/>
        <end position="64"/>
    </location>
</feature>